<organism>
    <name type="scientific">Staphylococcus aureus</name>
    <dbReference type="NCBI Taxonomy" id="1280"/>
    <lineage>
        <taxon>Bacteria</taxon>
        <taxon>Bacillati</taxon>
        <taxon>Bacillota</taxon>
        <taxon>Bacilli</taxon>
        <taxon>Bacillales</taxon>
        <taxon>Staphylococcaceae</taxon>
        <taxon>Staphylococcus</taxon>
    </lineage>
</organism>
<reference key="1">
    <citation type="journal article" date="1996" name="J. Biol. Chem.">
        <title>Molecular cloning and expression of the gene for elastin-binding protein (ebpS) in Staphylococcus aureus.</title>
        <authorList>
            <person name="Park P.W."/>
            <person name="Rosenbloom J."/>
            <person name="Abrams W.R."/>
            <person name="Rosenbloom J."/>
            <person name="Mecham R.P."/>
        </authorList>
    </citation>
    <scope>NUCLEOTIDE SEQUENCE [GENOMIC DNA]</scope>
    <scope>PROTEIN SEQUENCE OF 60-71 AND 126-144</scope>
    <scope>FUNCTION</scope>
    <source>
        <strain>ATCC 12598 / Cowan 1 / DSM 20372 / NCIMB 11787 / NCTC 8530</strain>
    </source>
</reference>
<reference key="2">
    <citation type="journal article" date="2002" name="J. Biol. Chem.">
        <title>The elastin-binding protein of Staphylococcus aureus (EbpS) is expressed at the cell surface as an integral membrane protein and not as a cell-wall associated protein.</title>
        <authorList>
            <person name="Downer R."/>
            <person name="Roche F.M."/>
            <person name="Park P.W."/>
            <person name="Mecham R.P."/>
            <person name="Foster T.J."/>
        </authorList>
    </citation>
    <scope>SEQUENCE REVISION</scope>
    <source>
        <strain>ATCC 12598 / Cowan 1 / DSM 20372 / NCIMB 11787 / NCTC 8530</strain>
    </source>
</reference>
<reference key="3">
    <citation type="journal article" date="1991" name="J. Biol. Chem.">
        <title>Binding of elastin to Staphylococcus aureus.</title>
        <authorList>
            <person name="Park P.W."/>
            <person name="Roberts D.D."/>
            <person name="Grosso L.E."/>
            <person name="Parks W.C."/>
            <person name="Rosenbloom J."/>
            <person name="Abrams W.R."/>
            <person name="Mecham R.P."/>
        </authorList>
    </citation>
    <scope>PROTEIN SEQUENCE OF 2-19</scope>
    <scope>FUNCTION</scope>
    <source>
        <strain>8095</strain>
        <strain>ATCC 10832 / Wood 46</strain>
        <strain>ATCC 12598 / Cowan 1 / DSM 20372 / NCIMB 11787 / NCTC 8530</strain>
    </source>
</reference>
<reference key="4">
    <citation type="journal article" date="1999" name="J. Biol. Chem.">
        <title>Characterization of the elastin binding domain in the cell-surface 25-kDa elastin-binding protein of Staphylococcus aureus (EbpS).</title>
        <authorList>
            <person name="Park P.W."/>
            <person name="Broekelmann T.J."/>
            <person name="Mecham B.R."/>
            <person name="Mecham R.P."/>
        </authorList>
    </citation>
    <scope>FUNCTION</scope>
    <scope>ELASTIN-BINDING DOMAIN</scope>
    <scope>MUTAGENESIS OF ASP-23</scope>
    <source>
        <strain>ATCC 12598 / Cowan 1 / DSM 20372 / NCIMB 11787 / NCTC 8530</strain>
    </source>
</reference>
<reference key="5">
    <citation type="journal article" date="2004" name="J. Biol. Chem.">
        <title>The N-terminal A domain of fibronectin-binding proteins A and B promotes adhesion of Staphylococcus aureus to elastin.</title>
        <authorList>
            <person name="Roche F.M."/>
            <person name="Downer R."/>
            <person name="Keane F."/>
            <person name="Speziale P."/>
            <person name="Park P.W."/>
            <person name="Foster T.J."/>
        </authorList>
    </citation>
    <scope>FUNCTION</scope>
    <source>
        <strain>ATCC 12598 / Cowan 1 / DSM 20372 / NCIMB 11787 / NCTC 8530</strain>
        <strain>Newman</strain>
        <strain>P1</strain>
    </source>
</reference>
<evidence type="ECO:0000250" key="1"/>
<evidence type="ECO:0000255" key="2"/>
<evidence type="ECO:0000255" key="3">
    <source>
        <dbReference type="PROSITE-ProRule" id="PRU01118"/>
    </source>
</evidence>
<evidence type="ECO:0000256" key="4">
    <source>
        <dbReference type="SAM" id="MobiDB-lite"/>
    </source>
</evidence>
<evidence type="ECO:0000269" key="5">
    <source>
    </source>
</evidence>
<evidence type="ECO:0000269" key="6">
    <source>
    </source>
</evidence>
<evidence type="ECO:0000269" key="7">
    <source>
    </source>
</evidence>
<evidence type="ECO:0000269" key="8">
    <source>
    </source>
</evidence>
<evidence type="ECO:0000305" key="9"/>
<dbReference type="EMBL" id="U48826">
    <property type="protein sequence ID" value="AAC44135.2"/>
    <property type="molecule type" value="Genomic_DNA"/>
</dbReference>
<dbReference type="RefSeq" id="WP_000069298.1">
    <property type="nucleotide sequence ID" value="NZ_WKIW01000001.1"/>
</dbReference>
<dbReference type="SMR" id="Q53630"/>
<dbReference type="PRO" id="PR:Q53630"/>
<dbReference type="GO" id="GO:0005886">
    <property type="term" value="C:plasma membrane"/>
    <property type="evidence" value="ECO:0007669"/>
    <property type="project" value="UniProtKB-SubCell"/>
</dbReference>
<dbReference type="CDD" id="cd00118">
    <property type="entry name" value="LysM"/>
    <property type="match status" value="1"/>
</dbReference>
<dbReference type="Gene3D" id="3.10.350.10">
    <property type="entry name" value="LysM domain"/>
    <property type="match status" value="1"/>
</dbReference>
<dbReference type="InterPro" id="IPR018392">
    <property type="entry name" value="LysM_dom"/>
</dbReference>
<dbReference type="InterPro" id="IPR036779">
    <property type="entry name" value="LysM_dom_sf"/>
</dbReference>
<dbReference type="NCBIfam" id="NF033598">
    <property type="entry name" value="elast_bind_EbpS"/>
    <property type="match status" value="1"/>
</dbReference>
<dbReference type="Pfam" id="PF01476">
    <property type="entry name" value="LysM"/>
    <property type="match status" value="1"/>
</dbReference>
<dbReference type="SMART" id="SM00257">
    <property type="entry name" value="LysM"/>
    <property type="match status" value="1"/>
</dbReference>
<dbReference type="SUPFAM" id="SSF54106">
    <property type="entry name" value="LysM domain"/>
    <property type="match status" value="1"/>
</dbReference>
<dbReference type="PROSITE" id="PS51782">
    <property type="entry name" value="LYSM"/>
    <property type="match status" value="1"/>
</dbReference>
<feature type="initiator methionine" description="Removed" evidence="6">
    <location>
        <position position="1"/>
    </location>
</feature>
<feature type="chain" id="PRO_0000271731" description="Elastin-binding protein EbpS">
    <location>
        <begin position="2"/>
        <end position="486"/>
    </location>
</feature>
<feature type="topological domain" description="Extracellular" evidence="2">
    <location>
        <begin position="2"/>
        <end position="204"/>
    </location>
</feature>
<feature type="transmembrane region" description="Helical" evidence="2">
    <location>
        <begin position="205"/>
        <end position="225"/>
    </location>
</feature>
<feature type="topological domain" description="Cytoplasmic" evidence="2">
    <location>
        <begin position="226"/>
        <end position="319"/>
    </location>
</feature>
<feature type="transmembrane region" description="Helical" evidence="2">
    <location>
        <begin position="320"/>
        <end position="340"/>
    </location>
</feature>
<feature type="topological domain" description="Extracellular" evidence="2">
    <location>
        <begin position="341"/>
        <end position="486"/>
    </location>
</feature>
<feature type="domain" description="LysM" evidence="3">
    <location>
        <begin position="437"/>
        <end position="485"/>
    </location>
</feature>
<feature type="region of interest" description="Disordered" evidence="4">
    <location>
        <begin position="1"/>
        <end position="314"/>
    </location>
</feature>
<feature type="region of interest" description="Elastin-binding">
    <location>
        <begin position="14"/>
        <end position="34"/>
    </location>
</feature>
<feature type="region of interest" description="Disordered" evidence="4">
    <location>
        <begin position="351"/>
        <end position="440"/>
    </location>
</feature>
<feature type="compositionally biased region" description="Basic and acidic residues" evidence="4">
    <location>
        <begin position="1"/>
        <end position="40"/>
    </location>
</feature>
<feature type="compositionally biased region" description="Polar residues" evidence="4">
    <location>
        <begin position="64"/>
        <end position="85"/>
    </location>
</feature>
<feature type="compositionally biased region" description="Basic and acidic residues" evidence="4">
    <location>
        <begin position="103"/>
        <end position="117"/>
    </location>
</feature>
<feature type="compositionally biased region" description="Basic and acidic residues" evidence="4">
    <location>
        <begin position="126"/>
        <end position="160"/>
    </location>
</feature>
<feature type="compositionally biased region" description="Basic and acidic residues" evidence="4">
    <location>
        <begin position="180"/>
        <end position="199"/>
    </location>
</feature>
<feature type="compositionally biased region" description="Low complexity" evidence="4">
    <location>
        <begin position="204"/>
        <end position="225"/>
    </location>
</feature>
<feature type="compositionally biased region" description="Polar residues" evidence="4">
    <location>
        <begin position="233"/>
        <end position="246"/>
    </location>
</feature>
<feature type="compositionally biased region" description="Basic and acidic residues" evidence="4">
    <location>
        <begin position="247"/>
        <end position="259"/>
    </location>
</feature>
<feature type="compositionally biased region" description="Low complexity" evidence="4">
    <location>
        <begin position="278"/>
        <end position="297"/>
    </location>
</feature>
<feature type="compositionally biased region" description="Basic and acidic residues" evidence="4">
    <location>
        <begin position="300"/>
        <end position="314"/>
    </location>
</feature>
<feature type="compositionally biased region" description="Basic and acidic residues" evidence="4">
    <location>
        <begin position="361"/>
        <end position="398"/>
    </location>
</feature>
<feature type="compositionally biased region" description="Low complexity" evidence="4">
    <location>
        <begin position="403"/>
        <end position="431"/>
    </location>
</feature>
<feature type="mutagenesis site" description="Abolishes binding to elastin." evidence="8">
    <original>D</original>
    <variation>N</variation>
    <location>
        <position position="23"/>
    </location>
</feature>
<feature type="sequence conflict" description="In Ref. 3; AA sequence." evidence="9" ref="3">
    <original>S</original>
    <variation>Q</variation>
    <location>
        <position position="15"/>
    </location>
</feature>
<feature type="sequence conflict" description="In Ref. 3; AA sequence." evidence="9" ref="3">
    <original>I</original>
    <variation>S</variation>
    <location>
        <position position="16"/>
    </location>
</feature>
<comment type="function">
    <text evidence="5 6 7 8">Promotes binding of soluble elastin peptides and tropoelastin to S.aureus cells although it is not able to promote bacterial adherence to immobilized elastin and, therefore, is not a microbial surface component recognizing adhesive matrix molecule (MSCRAMM).</text>
</comment>
<comment type="subcellular location">
    <subcellularLocation>
        <location evidence="1">Cell membrane</location>
        <topology evidence="1">Multi-pass membrane protein</topology>
    </subcellularLocation>
</comment>
<comment type="domain">
    <text>The elastin-binding domain is located between residues 13-33 at the surface-exposed N-terminus, whereas the C-terminus, containing the LysM peptidoglycan-binding domain, is not exposed on the surface of intact cells and presumably remains buried within the peptidoglycan. The presence of the TNSHQD sequence, corresponding to residues 18-23, is essential for EbpS activity but not sufficient, additional flanking amino acids in the amino- or carboxy-terminal are required for elastin recognition.</text>
</comment>
<protein>
    <recommendedName>
        <fullName>Elastin-binding protein EbpS</fullName>
    </recommendedName>
</protein>
<proteinExistence type="evidence at protein level"/>
<sequence length="486" mass="53080">MSNNFKDDFEKNRQSIDTNSHQDHTEDVEKDQSELEHQDTIENTEQQFPPRNAQRRKRRRDLATNHNKQVHNESQTSEDNVQNEAGTIDDRQVESSHSTESQEPSHQDSTPQHEEGYYNKNAFAMDKSHPEPIEDNDKHETIKEAENNTEHSTVSDKSEAEQSQQPKPYFATGANQANTSKDKHDDVTVKQDKDESKDHHSGKKGAAIGAGTAGVAGAAGAMGVSKAKKHSNDAQNKSNSGKVNNSTEDKASEDKSKEHHNGKKGAAIGAGTAGLAGGAASNSASAASKPHASNNASQNNDEHDHHDRDKERKKGGMAKVLLPLIAAVLIIGALAIFGGMALNNHNNGTKENKIANTNKNNADESKDKDTSKDASKDKSKSTDSDKSKDDQDKATKDESDNDQNNANQANNQAQNNQNQQQANQNQQQQQQRQGGGQRHTVNGQENLYRIAIQYYGSGSPENVEKIRRANGLSGNNIRNGQQIVIP</sequence>
<keyword id="KW-1003">Cell membrane</keyword>
<keyword id="KW-0903">Direct protein sequencing</keyword>
<keyword id="KW-0472">Membrane</keyword>
<keyword id="KW-0812">Transmembrane</keyword>
<keyword id="KW-1133">Transmembrane helix</keyword>
<name>EBPS_STAAU</name>
<gene>
    <name type="primary">ebpS</name>
</gene>
<accession>Q53630</accession>
<accession>Q9R5R5</accession>
<accession>Q9R5R6</accession>